<protein>
    <recommendedName>
        <fullName>Uncharacterized transmembrane protein DDB_G0283573</fullName>
    </recommendedName>
</protein>
<comment type="subcellular location">
    <subcellularLocation>
        <location evidence="2">Membrane</location>
        <topology evidence="2">Single-pass membrane protein</topology>
    </subcellularLocation>
</comment>
<sequence length="76" mass="8597">MLGRLIKDTTQFVKSSTKFGIVWGPKLAPWGITLGLGAFYFFQPKFLFKPLPIIGSNYLTQKDLDKMKKEAAENSQ</sequence>
<keyword id="KW-0472">Membrane</keyword>
<keyword id="KW-1185">Reference proteome</keyword>
<keyword id="KW-0812">Transmembrane</keyword>
<keyword id="KW-1133">Transmembrane helix</keyword>
<evidence type="ECO:0000255" key="1"/>
<evidence type="ECO:0000305" key="2"/>
<proteinExistence type="predicted"/>
<dbReference type="EMBL" id="AAFI02000055">
    <property type="protein sequence ID" value="EAL65664.1"/>
    <property type="molecule type" value="Genomic_DNA"/>
</dbReference>
<dbReference type="RefSeq" id="XP_639026.1">
    <property type="nucleotide sequence ID" value="XM_633934.1"/>
</dbReference>
<dbReference type="SMR" id="Q54QV8"/>
<dbReference type="FunCoup" id="Q54QV8">
    <property type="interactions" value="417"/>
</dbReference>
<dbReference type="STRING" id="44689.Q54QV8"/>
<dbReference type="PaxDb" id="44689-DDB0185576"/>
<dbReference type="EnsemblProtists" id="EAL65664">
    <property type="protein sequence ID" value="EAL65664"/>
    <property type="gene ID" value="DDB_G0283573"/>
</dbReference>
<dbReference type="GeneID" id="8624154"/>
<dbReference type="KEGG" id="ddi:DDB_G0283573"/>
<dbReference type="dictyBase" id="DDB_G0283573">
    <property type="gene designation" value="tom20"/>
</dbReference>
<dbReference type="VEuPathDB" id="AmoebaDB:DDB_G0283573"/>
<dbReference type="eggNOG" id="ENOG502RIHA">
    <property type="taxonomic scope" value="Eukaryota"/>
</dbReference>
<dbReference type="HOGENOM" id="CLU_2659719_0_0_1"/>
<dbReference type="InParanoid" id="Q54QV8"/>
<dbReference type="OMA" id="WAPTAMI"/>
<dbReference type="PRO" id="PR:Q54QV8"/>
<dbReference type="Proteomes" id="UP000002195">
    <property type="component" value="Chromosome 4"/>
</dbReference>
<dbReference type="GO" id="GO:0005742">
    <property type="term" value="C:mitochondrial outer membrane translocase complex"/>
    <property type="evidence" value="ECO:0000304"/>
    <property type="project" value="dictyBase"/>
</dbReference>
<dbReference type="GO" id="GO:0045040">
    <property type="term" value="P:protein insertion into mitochondrial outer membrane"/>
    <property type="evidence" value="ECO:0000304"/>
    <property type="project" value="dictyBase"/>
</dbReference>
<gene>
    <name type="ORF">DDB_G0283573</name>
</gene>
<name>Y5576_DICDI</name>
<organism>
    <name type="scientific">Dictyostelium discoideum</name>
    <name type="common">Social amoeba</name>
    <dbReference type="NCBI Taxonomy" id="44689"/>
    <lineage>
        <taxon>Eukaryota</taxon>
        <taxon>Amoebozoa</taxon>
        <taxon>Evosea</taxon>
        <taxon>Eumycetozoa</taxon>
        <taxon>Dictyostelia</taxon>
        <taxon>Dictyosteliales</taxon>
        <taxon>Dictyosteliaceae</taxon>
        <taxon>Dictyostelium</taxon>
    </lineage>
</organism>
<accession>Q54QV8</accession>
<feature type="chain" id="PRO_0000350884" description="Uncharacterized transmembrane protein DDB_G0283573">
    <location>
        <begin position="1"/>
        <end position="76"/>
    </location>
</feature>
<feature type="transmembrane region" description="Helical" evidence="1">
    <location>
        <begin position="20"/>
        <end position="42"/>
    </location>
</feature>
<reference key="1">
    <citation type="journal article" date="2005" name="Nature">
        <title>The genome of the social amoeba Dictyostelium discoideum.</title>
        <authorList>
            <person name="Eichinger L."/>
            <person name="Pachebat J.A."/>
            <person name="Gloeckner G."/>
            <person name="Rajandream M.A."/>
            <person name="Sucgang R."/>
            <person name="Berriman M."/>
            <person name="Song J."/>
            <person name="Olsen R."/>
            <person name="Szafranski K."/>
            <person name="Xu Q."/>
            <person name="Tunggal B."/>
            <person name="Kummerfeld S."/>
            <person name="Madera M."/>
            <person name="Konfortov B.A."/>
            <person name="Rivero F."/>
            <person name="Bankier A.T."/>
            <person name="Lehmann R."/>
            <person name="Hamlin N."/>
            <person name="Davies R."/>
            <person name="Gaudet P."/>
            <person name="Fey P."/>
            <person name="Pilcher K."/>
            <person name="Chen G."/>
            <person name="Saunders D."/>
            <person name="Sodergren E.J."/>
            <person name="Davis P."/>
            <person name="Kerhornou A."/>
            <person name="Nie X."/>
            <person name="Hall N."/>
            <person name="Anjard C."/>
            <person name="Hemphill L."/>
            <person name="Bason N."/>
            <person name="Farbrother P."/>
            <person name="Desany B."/>
            <person name="Just E."/>
            <person name="Morio T."/>
            <person name="Rost R."/>
            <person name="Churcher C.M."/>
            <person name="Cooper J."/>
            <person name="Haydock S."/>
            <person name="van Driessche N."/>
            <person name="Cronin A."/>
            <person name="Goodhead I."/>
            <person name="Muzny D.M."/>
            <person name="Mourier T."/>
            <person name="Pain A."/>
            <person name="Lu M."/>
            <person name="Harper D."/>
            <person name="Lindsay R."/>
            <person name="Hauser H."/>
            <person name="James K.D."/>
            <person name="Quiles M."/>
            <person name="Madan Babu M."/>
            <person name="Saito T."/>
            <person name="Buchrieser C."/>
            <person name="Wardroper A."/>
            <person name="Felder M."/>
            <person name="Thangavelu M."/>
            <person name="Johnson D."/>
            <person name="Knights A."/>
            <person name="Loulseged H."/>
            <person name="Mungall K.L."/>
            <person name="Oliver K."/>
            <person name="Price C."/>
            <person name="Quail M.A."/>
            <person name="Urushihara H."/>
            <person name="Hernandez J."/>
            <person name="Rabbinowitsch E."/>
            <person name="Steffen D."/>
            <person name="Sanders M."/>
            <person name="Ma J."/>
            <person name="Kohara Y."/>
            <person name="Sharp S."/>
            <person name="Simmonds M.N."/>
            <person name="Spiegler S."/>
            <person name="Tivey A."/>
            <person name="Sugano S."/>
            <person name="White B."/>
            <person name="Walker D."/>
            <person name="Woodward J.R."/>
            <person name="Winckler T."/>
            <person name="Tanaka Y."/>
            <person name="Shaulsky G."/>
            <person name="Schleicher M."/>
            <person name="Weinstock G.M."/>
            <person name="Rosenthal A."/>
            <person name="Cox E.C."/>
            <person name="Chisholm R.L."/>
            <person name="Gibbs R.A."/>
            <person name="Loomis W.F."/>
            <person name="Platzer M."/>
            <person name="Kay R.R."/>
            <person name="Williams J.G."/>
            <person name="Dear P.H."/>
            <person name="Noegel A.A."/>
            <person name="Barrell B.G."/>
            <person name="Kuspa A."/>
        </authorList>
    </citation>
    <scope>NUCLEOTIDE SEQUENCE [LARGE SCALE GENOMIC DNA]</scope>
    <source>
        <strain>AX4</strain>
    </source>
</reference>